<comment type="function">
    <text evidence="2">Small GTPase that cycles between an active GTP-bound and an inactive GDP-bound state and mainly functions in vesicle-mediated endoplasmic reticulum (ER) to Golgi transport. The active GTP-bound form inserts into the endoplasmic reticulum membrane where it recruits the remainder of the coat protein complex II/COPII. The coat protein complex II assembling and polymerizing on endoplasmic reticulum membrane is responsible for both the sorting of cargos and the deformation and budding of membranes into vesicles destined to the Golgi. In contrast to SAR1A, SAR1B specifically interacts with the cargo receptor SURF4 to mediate the transport of lipid-carrying lipoproteins including APOB and APOA1 from the endoplasmic reticulum to the Golgi and thereby, indirectly regulates lipid homeostasis. In addition to its role in vesicle trafficking, can also function as a leucine sensor regulating TORC1 signaling and more indirectly cellular metabolism, growth and survival. In absence of leucine, interacts with the GATOR2 complex via MIOS and inhibits TORC1 signaling. The binding of leucine abrogates the interaction with GATOR2 and the inhibition of the TORC1 signaling. This function is completely independent of the GTPase activity of SAR1B.</text>
</comment>
<comment type="catalytic activity">
    <reaction evidence="2">
        <text>GTP + H2O = GDP + phosphate + H(+)</text>
        <dbReference type="Rhea" id="RHEA:19669"/>
        <dbReference type="ChEBI" id="CHEBI:15377"/>
        <dbReference type="ChEBI" id="CHEBI:15378"/>
        <dbReference type="ChEBI" id="CHEBI:37565"/>
        <dbReference type="ChEBI" id="CHEBI:43474"/>
        <dbReference type="ChEBI" id="CHEBI:58189"/>
        <dbReference type="EC" id="3.6.5.2"/>
    </reaction>
    <physiologicalReaction direction="left-to-right" evidence="2">
        <dbReference type="Rhea" id="RHEA:19670"/>
    </physiologicalReaction>
</comment>
<comment type="activity regulation">
    <text evidence="1 2">Small GTPases activation is mediated by guanine exchange factors (GEF), while inactivation through hydrolysis of the bound GTP is stimulated by GTPase activating proteins (GAP) (By similarity). Activated by the guanine nucleotide exchange factor PREB/SEC12 that facilitates the loading of SAR1B with GTP (By similarity). GTP hydrolysis is stimulated by SEC23/24 (By similarity).</text>
</comment>
<comment type="subunit">
    <text evidence="2">Homodimer; upon association with membrane. Part of the coat protein complex II/COPII, composed of SEC23/24 and SEC13/31 heterodimers, that it helps recruit and assemble on endoplasmic reticulum (ER) membranes at ER exit site. Interacts with PREB; PREB acts as a guanine nucleotide exchange factor facilitating the activation of SAR1B by loading it with GTP. Interacts with SURF4; recruits the cargo receptor SURF4 and its lipoprotein cargos to COPII-coated ER to Golgi transport vesicles. Interacts with MIOS; the interaction is direct, disrupted by the binding of leucine and mediates the interaction of SAR1B with the GATOR2 complex to negatively regulate the TORC1 signaling upon leucine deprivation.</text>
</comment>
<comment type="subcellular location">
    <subcellularLocation>
        <location evidence="2">Endoplasmic reticulum membrane</location>
        <topology evidence="1">Peripheral membrane protein</topology>
    </subcellularLocation>
    <subcellularLocation>
        <location evidence="1">Golgi apparatus</location>
        <location evidence="1">Golgi stack membrane</location>
        <topology evidence="1">Peripheral membrane protein</topology>
    </subcellularLocation>
    <subcellularLocation>
        <location evidence="2">Cytoplasm</location>
        <location evidence="2">Cytosol</location>
    </subcellularLocation>
    <subcellularLocation>
        <location evidence="2">Lysosome membrane</location>
    </subcellularLocation>
    <text evidence="2">Active at endoplasmic reticulum exit sites (ERES) where it inserts into the membrane and recruits the remainder of the coat protein complex II/COPII. Upon leucine deprivation, associates with lysosomal membranes to repress TORC1 signaling.</text>
</comment>
<comment type="similarity">
    <text evidence="3">Belongs to the small GTPase superfamily. SAR1 family.</text>
</comment>
<name>SAR1B_RAT</name>
<gene>
    <name evidence="4" type="primary">Sar1b</name>
</gene>
<reference key="1">
    <citation type="journal article" date="2004" name="Genome Res.">
        <title>The status, quality, and expansion of the NIH full-length cDNA project: the Mammalian Gene Collection (MGC).</title>
        <authorList>
            <consortium name="The MGC Project Team"/>
        </authorList>
    </citation>
    <scope>NUCLEOTIDE SEQUENCE [LARGE SCALE MRNA]</scope>
    <source>
        <tissue>Ovary</tissue>
    </source>
</reference>
<accession>Q5HZY2</accession>
<sequence>MSFIFDWIYSGFSSVLQFLGLYKKTGKLVFLGLDNAGKTTLLHMLKDDRLGQHVPTLHPTSEELTIAGMTFTTFDLGGHLQARRVWKNYLPAINGIVFLVDCADHERLLESKEELDSLMTDETIANVPILILGNKIDRPEAISEERLREMFGLYGQTTGKGSVSLKELNARPLEVFMCSVLKRQGYGEGFRWMAQYID</sequence>
<organism>
    <name type="scientific">Rattus norvegicus</name>
    <name type="common">Rat</name>
    <dbReference type="NCBI Taxonomy" id="10116"/>
    <lineage>
        <taxon>Eukaryota</taxon>
        <taxon>Metazoa</taxon>
        <taxon>Chordata</taxon>
        <taxon>Craniata</taxon>
        <taxon>Vertebrata</taxon>
        <taxon>Euteleostomi</taxon>
        <taxon>Mammalia</taxon>
        <taxon>Eutheria</taxon>
        <taxon>Euarchontoglires</taxon>
        <taxon>Glires</taxon>
        <taxon>Rodentia</taxon>
        <taxon>Myomorpha</taxon>
        <taxon>Muroidea</taxon>
        <taxon>Muridae</taxon>
        <taxon>Murinae</taxon>
        <taxon>Rattus</taxon>
    </lineage>
</organism>
<feature type="chain" id="PRO_0000312558" description="Small COPII coat GTPase SAR1B">
    <location>
        <begin position="1"/>
        <end position="198"/>
    </location>
</feature>
<feature type="region of interest" description="Mediates recruitment to ER membranes" evidence="1">
    <location>
        <begin position="15"/>
        <end position="19"/>
    </location>
</feature>
<feature type="short sequence motif" description="STAR; SAR1-N-terminal activation recruitment. Required for the activation by PREB and subsequent recruitment to ER membrane" evidence="1">
    <location>
        <begin position="3"/>
        <end position="5"/>
    </location>
</feature>
<feature type="binding site" evidence="2">
    <location>
        <position position="34"/>
    </location>
    <ligand>
        <name>Mg(2+)</name>
        <dbReference type="ChEBI" id="CHEBI:18420"/>
    </ligand>
</feature>
<feature type="binding site" evidence="2">
    <location>
        <position position="35"/>
    </location>
    <ligand>
        <name>GDP</name>
        <dbReference type="ChEBI" id="CHEBI:58189"/>
    </ligand>
</feature>
<feature type="binding site" evidence="2">
    <location>
        <position position="35"/>
    </location>
    <ligand>
        <name>GTP</name>
        <dbReference type="ChEBI" id="CHEBI:37565"/>
    </ligand>
</feature>
<feature type="binding site" evidence="2">
    <location>
        <position position="36"/>
    </location>
    <ligand>
        <name>GDP</name>
        <dbReference type="ChEBI" id="CHEBI:58189"/>
    </ligand>
</feature>
<feature type="binding site" evidence="2">
    <location>
        <position position="37"/>
    </location>
    <ligand>
        <name>GDP</name>
        <dbReference type="ChEBI" id="CHEBI:58189"/>
    </ligand>
</feature>
<feature type="binding site" evidence="2">
    <location>
        <position position="37"/>
    </location>
    <ligand>
        <name>GTP</name>
        <dbReference type="ChEBI" id="CHEBI:37565"/>
    </ligand>
</feature>
<feature type="binding site" evidence="2">
    <location>
        <position position="38"/>
    </location>
    <ligand>
        <name>GDP</name>
        <dbReference type="ChEBI" id="CHEBI:58189"/>
    </ligand>
</feature>
<feature type="binding site" evidence="2">
    <location>
        <position position="38"/>
    </location>
    <ligand>
        <name>GTP</name>
        <dbReference type="ChEBI" id="CHEBI:37565"/>
    </ligand>
</feature>
<feature type="binding site" evidence="2">
    <location>
        <position position="39"/>
    </location>
    <ligand>
        <name>GDP</name>
        <dbReference type="ChEBI" id="CHEBI:58189"/>
    </ligand>
</feature>
<feature type="binding site" evidence="2">
    <location>
        <position position="39"/>
    </location>
    <ligand>
        <name>GTP</name>
        <dbReference type="ChEBI" id="CHEBI:37565"/>
    </ligand>
</feature>
<feature type="binding site" evidence="2">
    <location>
        <position position="40"/>
    </location>
    <ligand>
        <name>GDP</name>
        <dbReference type="ChEBI" id="CHEBI:58189"/>
    </ligand>
</feature>
<feature type="binding site" evidence="2">
    <location>
        <position position="40"/>
    </location>
    <ligand>
        <name>GTP</name>
        <dbReference type="ChEBI" id="CHEBI:37565"/>
    </ligand>
</feature>
<feature type="binding site" evidence="2">
    <location>
        <position position="58"/>
    </location>
    <ligand>
        <name>GDP</name>
        <dbReference type="ChEBI" id="CHEBI:58189"/>
    </ligand>
</feature>
<feature type="binding site" evidence="2">
    <location>
        <position position="75"/>
    </location>
    <ligand>
        <name>Mg(2+)</name>
        <dbReference type="ChEBI" id="CHEBI:18420"/>
    </ligand>
</feature>
<feature type="binding site" evidence="2">
    <location>
        <position position="134"/>
    </location>
    <ligand>
        <name>GDP</name>
        <dbReference type="ChEBI" id="CHEBI:58189"/>
    </ligand>
</feature>
<feature type="binding site" evidence="2">
    <location>
        <position position="134"/>
    </location>
    <ligand>
        <name>GTP</name>
        <dbReference type="ChEBI" id="CHEBI:37565"/>
    </ligand>
</feature>
<feature type="binding site" evidence="2">
    <location>
        <position position="135"/>
    </location>
    <ligand>
        <name>GDP</name>
        <dbReference type="ChEBI" id="CHEBI:58189"/>
    </ligand>
</feature>
<feature type="binding site" evidence="2">
    <location>
        <position position="135"/>
    </location>
    <ligand>
        <name>GTP</name>
        <dbReference type="ChEBI" id="CHEBI:37565"/>
    </ligand>
</feature>
<feature type="binding site" evidence="2">
    <location>
        <position position="137"/>
    </location>
    <ligand>
        <name>GDP</name>
        <dbReference type="ChEBI" id="CHEBI:58189"/>
    </ligand>
</feature>
<feature type="binding site" evidence="2">
    <location>
        <position position="137"/>
    </location>
    <ligand>
        <name>GTP</name>
        <dbReference type="ChEBI" id="CHEBI:37565"/>
    </ligand>
</feature>
<feature type="binding site" evidence="2">
    <location>
        <position position="180"/>
    </location>
    <ligand>
        <name>GDP</name>
        <dbReference type="ChEBI" id="CHEBI:58189"/>
    </ligand>
</feature>
<feature type="binding site" evidence="2">
    <location>
        <position position="180"/>
    </location>
    <ligand>
        <name>GTP</name>
        <dbReference type="ChEBI" id="CHEBI:37565"/>
    </ligand>
</feature>
<feature type="binding site" evidence="2">
    <location>
        <position position="181"/>
    </location>
    <ligand>
        <name>GDP</name>
        <dbReference type="ChEBI" id="CHEBI:58189"/>
    </ligand>
</feature>
<feature type="binding site" evidence="2">
    <location>
        <position position="181"/>
    </location>
    <ligand>
        <name>GTP</name>
        <dbReference type="ChEBI" id="CHEBI:37565"/>
    </ligand>
</feature>
<feature type="modified residue" description="Phosphoserine" evidence="2">
    <location>
        <position position="164"/>
    </location>
</feature>
<protein>
    <recommendedName>
        <fullName evidence="2">Small COPII coat GTPase SAR1B</fullName>
        <ecNumber evidence="2">3.6.5.2</ecNumber>
    </recommendedName>
</protein>
<evidence type="ECO:0000250" key="1">
    <source>
        <dbReference type="UniProtKB" id="Q9QVY3"/>
    </source>
</evidence>
<evidence type="ECO:0000250" key="2">
    <source>
        <dbReference type="UniProtKB" id="Q9Y6B6"/>
    </source>
</evidence>
<evidence type="ECO:0000305" key="3"/>
<evidence type="ECO:0000312" key="4">
    <source>
        <dbReference type="RGD" id="1305590"/>
    </source>
</evidence>
<proteinExistence type="evidence at transcript level"/>
<dbReference type="EC" id="3.6.5.2" evidence="2"/>
<dbReference type="EMBL" id="BC088842">
    <property type="protein sequence ID" value="AAH88842.1"/>
    <property type="molecule type" value="mRNA"/>
</dbReference>
<dbReference type="RefSeq" id="NP_001009622.1">
    <property type="nucleotide sequence ID" value="NM_001009622.2"/>
</dbReference>
<dbReference type="SMR" id="Q5HZY2"/>
<dbReference type="FunCoup" id="Q5HZY2">
    <property type="interactions" value="3189"/>
</dbReference>
<dbReference type="STRING" id="10116.ENSRNOP00000006567"/>
<dbReference type="iPTMnet" id="Q5HZY2"/>
<dbReference type="PhosphoSitePlus" id="Q5HZY2"/>
<dbReference type="jPOST" id="Q5HZY2"/>
<dbReference type="PaxDb" id="10116-ENSRNOP00000006567"/>
<dbReference type="Ensembl" id="ENSRNOT00000006567.7">
    <property type="protein sequence ID" value="ENSRNOP00000006567.3"/>
    <property type="gene ID" value="ENSRNOG00000004820.7"/>
</dbReference>
<dbReference type="GeneID" id="287276"/>
<dbReference type="KEGG" id="rno:287276"/>
<dbReference type="UCSC" id="RGD:1305590">
    <property type="organism name" value="rat"/>
</dbReference>
<dbReference type="AGR" id="RGD:1305590"/>
<dbReference type="CTD" id="51128"/>
<dbReference type="RGD" id="1305590">
    <property type="gene designation" value="Sar1b"/>
</dbReference>
<dbReference type="eggNOG" id="KOG0077">
    <property type="taxonomic scope" value="Eukaryota"/>
</dbReference>
<dbReference type="GeneTree" id="ENSGT00940000164397"/>
<dbReference type="HOGENOM" id="CLU_040729_6_0_1"/>
<dbReference type="InParanoid" id="Q5HZY2"/>
<dbReference type="OrthoDB" id="4351at9989"/>
<dbReference type="PhylomeDB" id="Q5HZY2"/>
<dbReference type="TreeFam" id="TF312890"/>
<dbReference type="Reactome" id="R-RNO-204005">
    <property type="pathway name" value="COPII-mediated vesicle transport"/>
</dbReference>
<dbReference type="Reactome" id="R-RNO-2132295">
    <property type="pathway name" value="MHC class II antigen presentation"/>
</dbReference>
<dbReference type="Reactome" id="R-RNO-5694530">
    <property type="pathway name" value="Cargo concentration in the ER"/>
</dbReference>
<dbReference type="Reactome" id="R-RNO-8963888">
    <property type="pathway name" value="Chylomicron assembly"/>
</dbReference>
<dbReference type="Reactome" id="R-RNO-983170">
    <property type="pathway name" value="Antigen Presentation: Folding, assembly and peptide loading of class I MHC"/>
</dbReference>
<dbReference type="PRO" id="PR:Q5HZY2"/>
<dbReference type="Proteomes" id="UP000002494">
    <property type="component" value="Chromosome 10"/>
</dbReference>
<dbReference type="Bgee" id="ENSRNOG00000004820">
    <property type="expression patterns" value="Expressed in quadriceps femoris and 20 other cell types or tissues"/>
</dbReference>
<dbReference type="GO" id="GO:0030127">
    <property type="term" value="C:COPII vesicle coat"/>
    <property type="evidence" value="ECO:0000250"/>
    <property type="project" value="UniProtKB"/>
</dbReference>
<dbReference type="GO" id="GO:0005829">
    <property type="term" value="C:cytosol"/>
    <property type="evidence" value="ECO:0000266"/>
    <property type="project" value="RGD"/>
</dbReference>
<dbReference type="GO" id="GO:0070971">
    <property type="term" value="C:endoplasmic reticulum exit site"/>
    <property type="evidence" value="ECO:0000250"/>
    <property type="project" value="UniProtKB"/>
</dbReference>
<dbReference type="GO" id="GO:0005789">
    <property type="term" value="C:endoplasmic reticulum membrane"/>
    <property type="evidence" value="ECO:0007669"/>
    <property type="project" value="UniProtKB-SubCell"/>
</dbReference>
<dbReference type="GO" id="GO:0032580">
    <property type="term" value="C:Golgi cisterna membrane"/>
    <property type="evidence" value="ECO:0007669"/>
    <property type="project" value="UniProtKB-SubCell"/>
</dbReference>
<dbReference type="GO" id="GO:0005765">
    <property type="term" value="C:lysosomal membrane"/>
    <property type="evidence" value="ECO:0000266"/>
    <property type="project" value="RGD"/>
</dbReference>
<dbReference type="GO" id="GO:0140785">
    <property type="term" value="F:amino acid sensor activity"/>
    <property type="evidence" value="ECO:0000266"/>
    <property type="project" value="RGD"/>
</dbReference>
<dbReference type="GO" id="GO:0003925">
    <property type="term" value="F:G protein activity"/>
    <property type="evidence" value="ECO:0000250"/>
    <property type="project" value="UniProtKB"/>
</dbReference>
<dbReference type="GO" id="GO:0005525">
    <property type="term" value="F:GTP binding"/>
    <property type="evidence" value="ECO:0007669"/>
    <property type="project" value="UniProtKB-KW"/>
</dbReference>
<dbReference type="GO" id="GO:0003924">
    <property type="term" value="F:GTPase activity"/>
    <property type="evidence" value="ECO:0000318"/>
    <property type="project" value="GO_Central"/>
</dbReference>
<dbReference type="GO" id="GO:0046872">
    <property type="term" value="F:metal ion binding"/>
    <property type="evidence" value="ECO:0007669"/>
    <property type="project" value="UniProtKB-KW"/>
</dbReference>
<dbReference type="GO" id="GO:1990253">
    <property type="term" value="P:cellular response to leucine starvation"/>
    <property type="evidence" value="ECO:0000266"/>
    <property type="project" value="RGD"/>
</dbReference>
<dbReference type="GO" id="GO:0048208">
    <property type="term" value="P:COPII vesicle coating"/>
    <property type="evidence" value="ECO:0000250"/>
    <property type="project" value="UniProtKB"/>
</dbReference>
<dbReference type="GO" id="GO:0090110">
    <property type="term" value="P:COPII-coated vesicle cargo loading"/>
    <property type="evidence" value="ECO:0000250"/>
    <property type="project" value="UniProtKB"/>
</dbReference>
<dbReference type="GO" id="GO:0006888">
    <property type="term" value="P:endoplasmic reticulum to Golgi vesicle-mediated transport"/>
    <property type="evidence" value="ECO:0000250"/>
    <property type="project" value="UniProtKB"/>
</dbReference>
<dbReference type="GO" id="GO:0006886">
    <property type="term" value="P:intracellular protein transport"/>
    <property type="evidence" value="ECO:0007669"/>
    <property type="project" value="InterPro"/>
</dbReference>
<dbReference type="GO" id="GO:0140353">
    <property type="term" value="P:lipid export from cell"/>
    <property type="evidence" value="ECO:0000266"/>
    <property type="project" value="RGD"/>
</dbReference>
<dbReference type="GO" id="GO:0055088">
    <property type="term" value="P:lipid homeostasis"/>
    <property type="evidence" value="ECO:0000250"/>
    <property type="project" value="UniProtKB"/>
</dbReference>
<dbReference type="GO" id="GO:0042953">
    <property type="term" value="P:lipoprotein transport"/>
    <property type="evidence" value="ECO:0000250"/>
    <property type="project" value="UniProtKB"/>
</dbReference>
<dbReference type="GO" id="GO:0061024">
    <property type="term" value="P:membrane organization"/>
    <property type="evidence" value="ECO:0000318"/>
    <property type="project" value="GO_Central"/>
</dbReference>
<dbReference type="GO" id="GO:1904262">
    <property type="term" value="P:negative regulation of TORC1 signaling"/>
    <property type="evidence" value="ECO:0000266"/>
    <property type="project" value="RGD"/>
</dbReference>
<dbReference type="GO" id="GO:0003400">
    <property type="term" value="P:regulation of COPII vesicle coating"/>
    <property type="evidence" value="ECO:0000318"/>
    <property type="project" value="GO_Central"/>
</dbReference>
<dbReference type="GO" id="GO:0032368">
    <property type="term" value="P:regulation of lipid transport"/>
    <property type="evidence" value="ECO:0000250"/>
    <property type="project" value="UniProtKB"/>
</dbReference>
<dbReference type="GO" id="GO:1903432">
    <property type="term" value="P:regulation of TORC1 signaling"/>
    <property type="evidence" value="ECO:0000266"/>
    <property type="project" value="RGD"/>
</dbReference>
<dbReference type="GO" id="GO:0016050">
    <property type="term" value="P:vesicle organization"/>
    <property type="evidence" value="ECO:0000318"/>
    <property type="project" value="GO_Central"/>
</dbReference>
<dbReference type="CDD" id="cd00879">
    <property type="entry name" value="Sar1"/>
    <property type="match status" value="1"/>
</dbReference>
<dbReference type="FunFam" id="3.40.50.300:FF:000161">
    <property type="entry name" value="Small COPII coat GTPase"/>
    <property type="match status" value="1"/>
</dbReference>
<dbReference type="Gene3D" id="3.40.50.300">
    <property type="entry name" value="P-loop containing nucleotide triphosphate hydrolases"/>
    <property type="match status" value="1"/>
</dbReference>
<dbReference type="InterPro" id="IPR027417">
    <property type="entry name" value="P-loop_NTPase"/>
</dbReference>
<dbReference type="InterPro" id="IPR005225">
    <property type="entry name" value="Small_GTP-bd"/>
</dbReference>
<dbReference type="InterPro" id="IPR006689">
    <property type="entry name" value="Small_GTPase_ARF/SAR"/>
</dbReference>
<dbReference type="InterPro" id="IPR006687">
    <property type="entry name" value="Small_GTPase_SAR1"/>
</dbReference>
<dbReference type="NCBIfam" id="TIGR00231">
    <property type="entry name" value="small_GTP"/>
    <property type="match status" value="1"/>
</dbReference>
<dbReference type="PANTHER" id="PTHR45684">
    <property type="entry name" value="RE74312P"/>
    <property type="match status" value="1"/>
</dbReference>
<dbReference type="Pfam" id="PF00025">
    <property type="entry name" value="Arf"/>
    <property type="match status" value="1"/>
</dbReference>
<dbReference type="PRINTS" id="PR00328">
    <property type="entry name" value="SAR1GTPBP"/>
</dbReference>
<dbReference type="SMART" id="SM00177">
    <property type="entry name" value="ARF"/>
    <property type="match status" value="1"/>
</dbReference>
<dbReference type="SMART" id="SM00178">
    <property type="entry name" value="SAR"/>
    <property type="match status" value="1"/>
</dbReference>
<dbReference type="SUPFAM" id="SSF52540">
    <property type="entry name" value="P-loop containing nucleoside triphosphate hydrolases"/>
    <property type="match status" value="1"/>
</dbReference>
<dbReference type="PROSITE" id="PS51422">
    <property type="entry name" value="SAR1"/>
    <property type="match status" value="1"/>
</dbReference>
<keyword id="KW-0963">Cytoplasm</keyword>
<keyword id="KW-0256">Endoplasmic reticulum</keyword>
<keyword id="KW-0931">ER-Golgi transport</keyword>
<keyword id="KW-0333">Golgi apparatus</keyword>
<keyword id="KW-0342">GTP-binding</keyword>
<keyword id="KW-0378">Hydrolase</keyword>
<keyword id="KW-0458">Lysosome</keyword>
<keyword id="KW-0460">Magnesium</keyword>
<keyword id="KW-0472">Membrane</keyword>
<keyword id="KW-0479">Metal-binding</keyword>
<keyword id="KW-0547">Nucleotide-binding</keyword>
<keyword id="KW-0597">Phosphoprotein</keyword>
<keyword id="KW-0653">Protein transport</keyword>
<keyword id="KW-1185">Reference proteome</keyword>
<keyword id="KW-0813">Transport</keyword>